<protein>
    <recommendedName>
        <fullName evidence="14 15">Interferon regulatory factor 4</fullName>
        <shortName>IRF-4</shortName>
    </recommendedName>
    <alternativeName>
        <fullName evidence="16">Lymphocyte-specific interferon regulatory factor</fullName>
        <shortName>LSIRF</shortName>
    </alternativeName>
    <alternativeName>
        <fullName evidence="16">Multiple myeloma oncogene 1</fullName>
    </alternativeName>
    <alternativeName>
        <fullName>NF-EM5</fullName>
    </alternativeName>
</protein>
<reference key="1">
    <citation type="journal article" date="1996" name="Genomics">
        <title>Cloning of human lymphocyte-specific interferon regulatory factor (hLSIRF/hIRF4) and mapping of the gene to 6p23-p25.</title>
        <authorList>
            <person name="Grossman A."/>
            <person name="Mittrucker H.W."/>
            <person name="Nicholl J."/>
            <person name="Suzuki A."/>
            <person name="Chung S."/>
            <person name="Antonio L."/>
            <person name="Sugga S."/>
            <person name="Sutherland G.R."/>
            <person name="Siderovski D.P."/>
            <person name="Mak T.W."/>
        </authorList>
    </citation>
    <scope>NUCLEOTIDE SEQUENCE [MRNA] (ISOFORMS 1 AND 2)</scope>
    <source>
        <tissue>Spleen</tissue>
    </source>
</reference>
<reference key="2">
    <citation type="journal article" date="1997" name="Nat. Genet.">
        <title>Deregulation of MUM1/IRF4 by chromosomal translocation in multiple myeloma.</title>
        <authorList>
            <person name="Iida S."/>
            <person name="Rao P.H."/>
            <person name="Butler M."/>
            <person name="Corradini P."/>
            <person name="Boccadoro M."/>
            <person name="Klein B."/>
            <person name="Chaganti R.S.K."/>
            <person name="Dalla-Favera R."/>
        </authorList>
    </citation>
    <scope>NUCLEOTIDE SEQUENCE [MRNA] (ISOFORM 1)</scope>
    <scope>INVOLVEMENT IN MULTIPLE MYELOMA</scope>
    <source>
        <tissue>Spleen</tissue>
    </source>
</reference>
<reference key="3">
    <citation type="journal article" date="2003" name="Nature">
        <title>The DNA sequence and analysis of human chromosome 6.</title>
        <authorList>
            <person name="Mungall A.J."/>
            <person name="Palmer S.A."/>
            <person name="Sims S.K."/>
            <person name="Edwards C.A."/>
            <person name="Ashurst J.L."/>
            <person name="Wilming L."/>
            <person name="Jones M.C."/>
            <person name="Horton R."/>
            <person name="Hunt S.E."/>
            <person name="Scott C.E."/>
            <person name="Gilbert J.G.R."/>
            <person name="Clamp M.E."/>
            <person name="Bethel G."/>
            <person name="Milne S."/>
            <person name="Ainscough R."/>
            <person name="Almeida J.P."/>
            <person name="Ambrose K.D."/>
            <person name="Andrews T.D."/>
            <person name="Ashwell R.I.S."/>
            <person name="Babbage A.K."/>
            <person name="Bagguley C.L."/>
            <person name="Bailey J."/>
            <person name="Banerjee R."/>
            <person name="Barker D.J."/>
            <person name="Barlow K.F."/>
            <person name="Bates K."/>
            <person name="Beare D.M."/>
            <person name="Beasley H."/>
            <person name="Beasley O."/>
            <person name="Bird C.P."/>
            <person name="Blakey S.E."/>
            <person name="Bray-Allen S."/>
            <person name="Brook J."/>
            <person name="Brown A.J."/>
            <person name="Brown J.Y."/>
            <person name="Burford D.C."/>
            <person name="Burrill W."/>
            <person name="Burton J."/>
            <person name="Carder C."/>
            <person name="Carter N.P."/>
            <person name="Chapman J.C."/>
            <person name="Clark S.Y."/>
            <person name="Clark G."/>
            <person name="Clee C.M."/>
            <person name="Clegg S."/>
            <person name="Cobley V."/>
            <person name="Collier R.E."/>
            <person name="Collins J.E."/>
            <person name="Colman L.K."/>
            <person name="Corby N.R."/>
            <person name="Coville G.J."/>
            <person name="Culley K.M."/>
            <person name="Dhami P."/>
            <person name="Davies J."/>
            <person name="Dunn M."/>
            <person name="Earthrowl M.E."/>
            <person name="Ellington A.E."/>
            <person name="Evans K.A."/>
            <person name="Faulkner L."/>
            <person name="Francis M.D."/>
            <person name="Frankish A."/>
            <person name="Frankland J."/>
            <person name="French L."/>
            <person name="Garner P."/>
            <person name="Garnett J."/>
            <person name="Ghori M.J."/>
            <person name="Gilby L.M."/>
            <person name="Gillson C.J."/>
            <person name="Glithero R.J."/>
            <person name="Grafham D.V."/>
            <person name="Grant M."/>
            <person name="Gribble S."/>
            <person name="Griffiths C."/>
            <person name="Griffiths M.N.D."/>
            <person name="Hall R."/>
            <person name="Halls K.S."/>
            <person name="Hammond S."/>
            <person name="Harley J.L."/>
            <person name="Hart E.A."/>
            <person name="Heath P.D."/>
            <person name="Heathcott R."/>
            <person name="Holmes S.J."/>
            <person name="Howden P.J."/>
            <person name="Howe K.L."/>
            <person name="Howell G.R."/>
            <person name="Huckle E."/>
            <person name="Humphray S.J."/>
            <person name="Humphries M.D."/>
            <person name="Hunt A.R."/>
            <person name="Johnson C.M."/>
            <person name="Joy A.A."/>
            <person name="Kay M."/>
            <person name="Keenan S.J."/>
            <person name="Kimberley A.M."/>
            <person name="King A."/>
            <person name="Laird G.K."/>
            <person name="Langford C."/>
            <person name="Lawlor S."/>
            <person name="Leongamornlert D.A."/>
            <person name="Leversha M."/>
            <person name="Lloyd C.R."/>
            <person name="Lloyd D.M."/>
            <person name="Loveland J.E."/>
            <person name="Lovell J."/>
            <person name="Martin S."/>
            <person name="Mashreghi-Mohammadi M."/>
            <person name="Maslen G.L."/>
            <person name="Matthews L."/>
            <person name="McCann O.T."/>
            <person name="McLaren S.J."/>
            <person name="McLay K."/>
            <person name="McMurray A."/>
            <person name="Moore M.J.F."/>
            <person name="Mullikin J.C."/>
            <person name="Niblett D."/>
            <person name="Nickerson T."/>
            <person name="Novik K.L."/>
            <person name="Oliver K."/>
            <person name="Overton-Larty E.K."/>
            <person name="Parker A."/>
            <person name="Patel R."/>
            <person name="Pearce A.V."/>
            <person name="Peck A.I."/>
            <person name="Phillimore B.J.C.T."/>
            <person name="Phillips S."/>
            <person name="Plumb R.W."/>
            <person name="Porter K.M."/>
            <person name="Ramsey Y."/>
            <person name="Ranby S.A."/>
            <person name="Rice C.M."/>
            <person name="Ross M.T."/>
            <person name="Searle S.M."/>
            <person name="Sehra H.K."/>
            <person name="Sheridan E."/>
            <person name="Skuce C.D."/>
            <person name="Smith S."/>
            <person name="Smith M."/>
            <person name="Spraggon L."/>
            <person name="Squares S.L."/>
            <person name="Steward C.A."/>
            <person name="Sycamore N."/>
            <person name="Tamlyn-Hall G."/>
            <person name="Tester J."/>
            <person name="Theaker A.J."/>
            <person name="Thomas D.W."/>
            <person name="Thorpe A."/>
            <person name="Tracey A."/>
            <person name="Tromans A."/>
            <person name="Tubby B."/>
            <person name="Wall M."/>
            <person name="Wallis J.M."/>
            <person name="West A.P."/>
            <person name="White S.S."/>
            <person name="Whitehead S.L."/>
            <person name="Whittaker H."/>
            <person name="Wild A."/>
            <person name="Willey D.J."/>
            <person name="Wilmer T.E."/>
            <person name="Wood J.M."/>
            <person name="Wray P.W."/>
            <person name="Wyatt J.C."/>
            <person name="Young L."/>
            <person name="Younger R.M."/>
            <person name="Bentley D.R."/>
            <person name="Coulson A."/>
            <person name="Durbin R.M."/>
            <person name="Hubbard T."/>
            <person name="Sulston J.E."/>
            <person name="Dunham I."/>
            <person name="Rogers J."/>
            <person name="Beck S."/>
        </authorList>
    </citation>
    <scope>NUCLEOTIDE SEQUENCE [LARGE SCALE GENOMIC DNA]</scope>
</reference>
<reference key="4">
    <citation type="journal article" date="2004" name="Genome Res.">
        <title>The status, quality, and expansion of the NIH full-length cDNA project: the Mammalian Gene Collection (MGC).</title>
        <authorList>
            <consortium name="The MGC Project Team"/>
        </authorList>
    </citation>
    <scope>NUCLEOTIDE SEQUENCE [LARGE SCALE MRNA] (ISOFORM 1)</scope>
    <source>
        <tissue>Skin</tissue>
    </source>
</reference>
<reference key="5">
    <citation type="journal article" date="1999" name="J. Biol. Chem.">
        <title>SPI-B activates transcription via a unique proline, serine, and threonine domain and exhibits DNA binding affinity differences from PU.1.</title>
        <authorList>
            <person name="Rao S."/>
            <person name="Matsumura A."/>
            <person name="Yoon J."/>
            <person name="Simon M.C."/>
        </authorList>
    </citation>
    <scope>INTERACTION WITH SPIB</scope>
</reference>
<reference key="6">
    <citation type="journal article" date="2003" name="Hum. Immunol.">
        <title>Molecular cloning of IBP, a SWAP-70 homologous GEF, which is highly expressed in the immune system.</title>
        <authorList>
            <person name="Gupta S."/>
            <person name="Lee A.E."/>
            <person name="Hu C."/>
            <person name="Fanzo J.C."/>
            <person name="Goldberg I."/>
            <person name="Cattoretti G."/>
            <person name="Pernis A.B."/>
        </authorList>
    </citation>
    <scope>INTERACTION WITH DEF6</scope>
    <source>
        <tissue>Lymph node</tissue>
    </source>
</reference>
<reference key="7">
    <citation type="journal article" date="2008" name="PLoS Genet.">
        <title>A genome-wide association study identifies novel alleles associated with hair color and skin pigmentation.</title>
        <authorList>
            <person name="Han J."/>
            <person name="Kraft P."/>
            <person name="Nan H."/>
            <person name="Guo Q."/>
            <person name="Chen C."/>
            <person name="Qureshi A."/>
            <person name="Hankinson S.E."/>
            <person name="Hu F.B."/>
            <person name="Duffy D.L."/>
            <person name="Zhao Z.Z."/>
            <person name="Martin N.G."/>
            <person name="Montgomery G.W."/>
            <person name="Hayward N.K."/>
            <person name="Thomas G."/>
            <person name="Hoover R.N."/>
            <person name="Chanock S."/>
            <person name="Hunter D.J."/>
        </authorList>
    </citation>
    <scope>POLYMORPHISM</scope>
</reference>
<reference key="8">
    <citation type="journal article" date="2011" name="BMC Syst. Biol.">
        <title>Initial characterization of the human central proteome.</title>
        <authorList>
            <person name="Burkard T.R."/>
            <person name="Planyavsky M."/>
            <person name="Kaupe I."/>
            <person name="Breitwieser F.P."/>
            <person name="Buerckstuemmer T."/>
            <person name="Bennett K.L."/>
            <person name="Superti-Furga G."/>
            <person name="Colinge J."/>
        </authorList>
    </citation>
    <scope>IDENTIFICATION BY MASS SPECTROMETRY [LARGE SCALE ANALYSIS]</scope>
</reference>
<reference key="9">
    <citation type="journal article" date="2013" name="Cell">
        <title>A polymorphism in IRF4 affects human pigmentation through a tyrosinase-dependent MITF/TFAP2A pathway.</title>
        <authorList>
            <person name="Praetorius C."/>
            <person name="Grill C."/>
            <person name="Stacey S.N."/>
            <person name="Metcalf A.M."/>
            <person name="Gorkin D.U."/>
            <person name="Robinson K.C."/>
            <person name="Van Otterloo E."/>
            <person name="Kim R.S."/>
            <person name="Bergsteinsdottir K."/>
            <person name="Ogmundsdottir M.H."/>
            <person name="Magnusdottir E."/>
            <person name="Mishra P.J."/>
            <person name="Davis S.R."/>
            <person name="Guo T."/>
            <person name="Zaidi M.R."/>
            <person name="Helgason A.S."/>
            <person name="Sigurdsson M.I."/>
            <person name="Meltzer P.S."/>
            <person name="Merlino G."/>
            <person name="Petit V."/>
            <person name="Larue L."/>
            <person name="Loftus S.K."/>
            <person name="Adams D.R."/>
            <person name="Sobhiafshar U."/>
            <person name="Emre N.C."/>
            <person name="Pavan W.J."/>
            <person name="Cornell R."/>
            <person name="Smith A.G."/>
            <person name="McCallion A.S."/>
            <person name="Fisher D.E."/>
            <person name="Stefansson K."/>
            <person name="Sturm R.A."/>
            <person name="Steingrimsson E."/>
        </authorList>
    </citation>
    <scope>POLYMORPHISM</scope>
</reference>
<reference key="10">
    <citation type="journal article" date="2018" name="J. Allergy Clin. Immunol.">
        <title>New human combined immunodeficiency caused by interferon regulatory factor 4 (IRF4) deficiency inherited by uniparental isodisomy.</title>
        <authorList>
            <person name="Bravo Garcia-Morato M."/>
            <person name="Aracil Santos F.J."/>
            <person name="Briones A.C."/>
            <person name="Blazquez Moreno A."/>
            <person name="Del Pozo Mate A."/>
            <person name="Dominguez-Soto A."/>
            <person name="Beato Merino M.J."/>
            <person name="Del Pino Molina L."/>
            <person name="Torres Canizales J."/>
            <person name="Marin A.V."/>
            <person name="Vallespin Garcia E."/>
            <person name="Feito Rodriguez M."/>
            <person name="Plaza Lopez Sabando D."/>
            <person name="Jimenez-Reinoso A."/>
            <person name="Mozo Del Castillo Y."/>
            <person name="Sanz Santaeufemia F.J."/>
            <person name="de Lucas-Laguna R."/>
            <person name="Cardenas P.P."/>
            <person name="Casamayor Polo L."/>
            <person name="Coronel Diaz M."/>
            <person name="Vales-Gomez M."/>
            <person name="Roldan Santiago E."/>
            <person name="Ferreira Cerdan A."/>
            <person name="Nevado Blanco J."/>
            <person name="Corbi A.L."/>
            <person name="Reyburn H.T."/>
            <person name="Regueiro J.R."/>
            <person name="Lopez-Granados E."/>
            <person name="Rodriguez Pena R."/>
        </authorList>
    </citation>
    <scope>INVOLVEMENT IN IMD131</scope>
</reference>
<reference key="11">
    <citation type="journal article" date="2021" name="J. Exp. Med.">
        <title>Constrained chromatin accessibility in PU.1-mutated agammaglobulinemia patients.</title>
        <authorList>
            <person name="Le Coz C."/>
            <person name="Nguyen D.N."/>
            <person name="Su C."/>
            <person name="Nolan B.E."/>
            <person name="Albrecht A.V."/>
            <person name="Xhani S."/>
            <person name="Sun D."/>
            <person name="Demaree B."/>
            <person name="Pillarisetti P."/>
            <person name="Khanna C."/>
            <person name="Wright F."/>
            <person name="Chen P.A."/>
            <person name="Yoon S."/>
            <person name="Stiegler A.L."/>
            <person name="Maurer K."/>
            <person name="Garifallou J.P."/>
            <person name="Rymaszewski A."/>
            <person name="Kroft S.H."/>
            <person name="Olson T.S."/>
            <person name="Seif A.E."/>
            <person name="Wertheim G."/>
            <person name="Grant S.F.A."/>
            <person name="Vo L.T."/>
            <person name="Puck J.M."/>
            <person name="Sullivan K.E."/>
            <person name="Routes J.M."/>
            <person name="Zakharova V."/>
            <person name="Shcherbina A."/>
            <person name="Mukhina A."/>
            <person name="Rudy N.L."/>
            <person name="Hurst A.C.E."/>
            <person name="Atkinson T.P."/>
            <person name="Boggon T.J."/>
            <person name="Hakonarson H."/>
            <person name="Abate A.R."/>
            <person name="Hajjar J."/>
            <person name="Nicholas S.K."/>
            <person name="Lupski J.R."/>
            <person name="Verbsky J."/>
            <person name="Chinn I.K."/>
            <person name="Gonzalez M.V."/>
            <person name="Wells A.D."/>
            <person name="Marson A."/>
            <person name="Poon G.M.K."/>
            <person name="Romberg N."/>
        </authorList>
    </citation>
    <scope>INTERACTION WITH SPI1</scope>
</reference>
<reference key="12">
    <citation type="submission" date="2006-10" db="PDB data bank">
        <title>Solution structure of the IRF domain of human interferon regulator factor 4.</title>
        <authorList>
            <consortium name="RIKEN structural genomics initiative (RSGI)"/>
        </authorList>
    </citation>
    <scope>STRUCTURE BY NMR OF 22-130</scope>
</reference>
<reference key="13">
    <citation type="journal article" date="2018" name="Elife">
        <title>IRF4 haploinsufficiency in a family with Whipple's disease.</title>
        <authorList>
            <person name="Guerin A."/>
            <person name="Kerner G."/>
            <person name="Marr N."/>
            <person name="Markle J.G."/>
            <person name="Fenollar F."/>
            <person name="Wong N."/>
            <person name="Boughorbel S."/>
            <person name="Avery D.T."/>
            <person name="Ma C.S."/>
            <person name="Bougarn S."/>
            <person name="Bouaziz M."/>
            <person name="Beziat V."/>
            <person name="Della Mina E."/>
            <person name="Oleaga-Quintas C."/>
            <person name="Lazarov T."/>
            <person name="Worley L."/>
            <person name="Nguyen T."/>
            <person name="Patin E."/>
            <person name="Deswarte C."/>
            <person name="Martinez-Barricarte R."/>
            <person name="Boucherit S."/>
            <person name="Ayral X."/>
            <person name="Edouard S."/>
            <person name="Boisson-Dupuis S."/>
            <person name="Rattina V."/>
            <person name="Bigio B."/>
            <person name="Vogt G."/>
            <person name="Geissmann F."/>
            <person name="Quintana-Murci L."/>
            <person name="Chaussabel D."/>
            <person name="Tangye S.G."/>
            <person name="Raoult D."/>
            <person name="Abel L."/>
            <person name="Bustamante J."/>
            <person name="Casanova J.L."/>
        </authorList>
    </citation>
    <scope>VARIANT IMD131 TRP-98</scope>
    <scope>CHARACTERIZATION OF VARIANT IMD131 TRP-98</scope>
    <scope>INVOLVEMENT IN IMD131</scope>
    <scope>MUTAGENESIS OF ARG-98 AND CYS-99</scope>
    <scope>FUNCTION</scope>
</reference>
<reference key="14">
    <citation type="journal article" date="2023" name="J. Exp. Med.">
        <title>A neomorphic mutation in the interferon activation domain of IRF4 causes a dominant primary immunodeficiency.</title>
        <authorList>
            <person name="Thouenon R."/>
            <person name="Chentout L."/>
            <person name="Moreno-Corona N."/>
            <person name="Poggi L."/>
            <person name="Lombardi E.P."/>
            <person name="Hoareau B."/>
            <person name="Schmitt Y."/>
            <person name="Lagresle-Peyrou C."/>
            <person name="Bustamante J."/>
            <person name="Andre I."/>
            <person name="Cavazzana M."/>
            <person name="Durandy A."/>
            <person name="Casanova J.L."/>
            <person name="Galicier L."/>
            <person name="Fadlallah J."/>
            <person name="Fischer A."/>
            <person name="Kracker S."/>
        </authorList>
    </citation>
    <scope>VARIANT IMD131 LEU-359</scope>
    <scope>CHARACTERIZATION OF VARIANT IMD131 LEU-359</scope>
    <scope>INVOLVEMENT IN IMD131</scope>
    <scope>FUNCTION</scope>
    <scope>SUBCELLULAR LOCATION</scope>
    <scope>MUTAGENESIS OF LEU-368</scope>
</reference>
<reference key="15">
    <citation type="journal article" date="2023" name="Sci. Immunol.">
        <title>A multimorphic mutation in IRF4 causes human autosomal dominant combined immunodeficiency.</title>
        <authorList>
            <consortium name="IRF4 International Consortium"/>
            <person name="Fornes O."/>
            <person name="Jia A."/>
            <person name="Kuehn H.S."/>
            <person name="Min Q."/>
            <person name="Pannicke U."/>
            <person name="Schleussner N."/>
            <person name="Thouenon R."/>
            <person name="Yu Z."/>
            <person name="de Los Angeles Astbury M."/>
            <person name="Biggs C.M."/>
            <person name="Galicchio M."/>
            <person name="Garcia-Campos J.A."/>
            <person name="Gismondi S."/>
            <person name="Gonzalez Villarreal G."/>
            <person name="Hildebrand K.J."/>
            <person name="Hoenig M."/>
            <person name="Hou J."/>
            <person name="Moshous D."/>
            <person name="Pittaluga S."/>
            <person name="Qian X."/>
            <person name="Rozmus J."/>
            <person name="Schulz A.S."/>
            <person name="Staines-Boone A.T."/>
            <person name="Sun B."/>
            <person name="Sun J."/>
            <person name="Uwe S."/>
            <person name="Venegas-Montoya E."/>
            <person name="Wang W."/>
            <person name="Wang X."/>
            <person name="Ying W."/>
            <person name="Zhai X."/>
            <person name="Zhou Q."/>
            <person name="Akalin A."/>
            <person name="Andre I."/>
            <person name="Barth T.F.E."/>
            <person name="Baumann B."/>
            <person name="Bruestle A."/>
            <person name="Burgio G."/>
            <person name="Bustamante J.C."/>
            <person name="Casanova J.L."/>
            <person name="Casarotto M.G."/>
            <person name="Cavazzana M."/>
            <person name="Chentout L."/>
            <person name="Cockburn I.A."/>
            <person name="Costanza M."/>
            <person name="Cui C."/>
            <person name="Daumke O."/>
            <person name="Del Bel K.L."/>
            <person name="Eibel H."/>
            <person name="Feng X."/>
            <person name="Franke V."/>
            <person name="Gebhardt J.C.M."/>
            <person name="Goetz A."/>
            <person name="Grunwald S."/>
            <person name="Hoareau B."/>
            <person name="Hughes T.R."/>
            <person name="Jacobsen E.M."/>
            <person name="Janz M."/>
            <person name="Jolma A."/>
            <person name="Lagresle-Peyrou C."/>
            <person name="Lai N."/>
            <person name="Li Y."/>
            <person name="Lin S."/>
            <person name="Lu H.Y."/>
            <person name="Lugo-Reyes S.O."/>
            <person name="Meng X."/>
            <person name="Moeller P."/>
            <person name="Moreno-Corona N."/>
            <person name="Niemela J.E."/>
            <person name="Novakovsky G."/>
            <person name="Perez-Caraballo J.J."/>
            <person name="Picard C."/>
            <person name="Poggi L."/>
            <person name="Puig-Lombardi M.E."/>
            <person name="Randall K.L."/>
            <person name="Reisser A."/>
            <person name="Schmitt Y."/>
            <person name="Seneviratne S."/>
            <person name="Sharma M."/>
            <person name="Stoddard J."/>
            <person name="Sundararaj S."/>
            <person name="Sutton H."/>
            <person name="Tran L.Q."/>
            <person name="Wang Y."/>
            <person name="Wasserman W.W."/>
            <person name="Wen Z."/>
            <person name="Winkler W."/>
            <person name="Xiong E."/>
            <person name="Yang A.W.H."/>
            <person name="Yu M."/>
            <person name="Zhang L."/>
            <person name="Zhang H."/>
            <person name="Zhao Q."/>
            <person name="Zhen X."/>
            <person name="Enders A."/>
            <person name="Kracker S."/>
            <person name="Martinez-Barricarte R."/>
            <person name="Mathas S."/>
            <person name="Rosenzweig S.D."/>
            <person name="Schwarz K."/>
            <person name="Turvey S.E."/>
            <person name="Wang J.Y."/>
        </authorList>
    </citation>
    <scope>VARIANT IMD131 ARG-95</scope>
    <scope>CHARACTERIZATION OF VARIANT IMD131 ARG-95</scope>
    <scope>INVOLVEMENT IN IMD131</scope>
    <scope>FUNCTION</scope>
</reference>
<accession>Q15306</accession>
<accession>Q5VUI7</accession>
<accession>Q99660</accession>
<evidence type="ECO:0000250" key="1"/>
<evidence type="ECO:0000250" key="2">
    <source>
        <dbReference type="UniProtKB" id="Q64287"/>
    </source>
</evidence>
<evidence type="ECO:0000255" key="3">
    <source>
        <dbReference type="PROSITE-ProRule" id="PRU00840"/>
    </source>
</evidence>
<evidence type="ECO:0000269" key="4">
    <source>
    </source>
</evidence>
<evidence type="ECO:0000269" key="5">
    <source>
    </source>
</evidence>
<evidence type="ECO:0000269" key="6">
    <source>
    </source>
</evidence>
<evidence type="ECO:0000269" key="7">
    <source>
    </source>
</evidence>
<evidence type="ECO:0000269" key="8">
    <source>
    </source>
</evidence>
<evidence type="ECO:0000269" key="9">
    <source>
    </source>
</evidence>
<evidence type="ECO:0000269" key="10">
    <source>
    </source>
</evidence>
<evidence type="ECO:0000269" key="11">
    <source>
    </source>
</evidence>
<evidence type="ECO:0000269" key="12">
    <source>
    </source>
</evidence>
<evidence type="ECO:0000269" key="13">
    <source>
    </source>
</evidence>
<evidence type="ECO:0000303" key="14">
    <source>
    </source>
</evidence>
<evidence type="ECO:0000303" key="15">
    <source>
    </source>
</evidence>
<evidence type="ECO:0000303" key="16">
    <source>
    </source>
</evidence>
<evidence type="ECO:0000305" key="17"/>
<evidence type="ECO:0007829" key="18">
    <source>
        <dbReference type="PDB" id="2DLL"/>
    </source>
</evidence>
<evidence type="ECO:0007829" key="19">
    <source>
        <dbReference type="PDB" id="6TD4"/>
    </source>
</evidence>
<evidence type="ECO:0007829" key="20">
    <source>
        <dbReference type="PDB" id="7O56"/>
    </source>
</evidence>
<evidence type="ECO:0007829" key="21">
    <source>
        <dbReference type="PDB" id="7OOT"/>
    </source>
</evidence>
<name>IRF4_HUMAN</name>
<feature type="chain" id="PRO_0000154556" description="Interferon regulatory factor 4">
    <location>
        <begin position="1"/>
        <end position="451"/>
    </location>
</feature>
<feature type="DNA-binding region" description="IRF tryptophan pentad repeat" evidence="3">
    <location>
        <begin position="21"/>
        <end position="129"/>
    </location>
</feature>
<feature type="modified residue" description="Phosphoserine; by ROCK2" evidence="2">
    <location>
        <position position="447"/>
    </location>
</feature>
<feature type="modified residue" description="Phosphoserine; by ROCK2" evidence="2">
    <location>
        <position position="448"/>
    </location>
</feature>
<feature type="splice variant" id="VSP_002755" description="In isoform 2." evidence="15">
    <location>
        <position position="165"/>
    </location>
</feature>
<feature type="sequence variant" id="VAR_090448" description="In IMD131; pathogenic; the orthologous mutation in knockin mice recapitulates the patient phenotype; affects DNA-binding transcription activator activity; the mutant is able to bind GATA-containing sequences that are not recognized by the wild type and is able to activate transcription from such non-canonical sequences; results in decreased transcription activation from a reporter construct containing canonical ISRE; increased nuclear localization; increased DNA binding." evidence="11">
    <original>T</original>
    <variation>R</variation>
    <location>
        <position position="95"/>
    </location>
</feature>
<feature type="sequence variant" id="VAR_090449" description="In IMD131; likely pathogenic; loss of DNA-binding transcription activator activity." evidence="9 12">
    <original>R</original>
    <variation>W</variation>
    <location>
        <position position="98"/>
    </location>
</feature>
<feature type="sequence variant" id="VAR_090450" description="In IMD131; likely pathogenic; loss of DNA-binding transcription activator activity; no effect on subcellular location." evidence="12">
    <original>F</original>
    <variation>L</variation>
    <location>
        <position position="359"/>
    </location>
</feature>
<feature type="mutagenesis site" description="Loss of DNA-binding transcription activator activity." evidence="9 12">
    <original>RC</original>
    <variation>AA</variation>
    <location>
        <begin position="98"/>
        <end position="99"/>
    </location>
</feature>
<feature type="mutagenesis site" description="Loss of DNA-binding transcription activator activity." evidence="12">
    <original>L</original>
    <variation>P</variation>
    <location>
        <position position="368"/>
    </location>
</feature>
<feature type="sequence conflict" description="In Ref. 2; AAB37258." evidence="17" ref="2">
    <original>Q</original>
    <variation>H</variation>
    <location>
        <position position="300"/>
    </location>
</feature>
<feature type="sequence conflict" description="In Ref. 2; AAB37258." evidence="17" ref="2">
    <original>K</original>
    <variation>N</variation>
    <location>
        <position position="306"/>
    </location>
</feature>
<feature type="sequence conflict" description="In Ref. 2; AAB37258." evidence="17" ref="2">
    <original>R</original>
    <variation>T</variation>
    <location>
        <position position="333"/>
    </location>
</feature>
<feature type="helix" evidence="19">
    <location>
        <begin position="24"/>
        <end position="34"/>
    </location>
</feature>
<feature type="strand" evidence="18">
    <location>
        <begin position="37"/>
        <end position="39"/>
    </location>
</feature>
<feature type="strand" evidence="19">
    <location>
        <begin position="41"/>
        <end position="44"/>
    </location>
</feature>
<feature type="turn" evidence="19">
    <location>
        <begin position="45"/>
        <end position="48"/>
    </location>
</feature>
<feature type="strand" evidence="19">
    <location>
        <begin position="49"/>
        <end position="53"/>
    </location>
</feature>
<feature type="strand" evidence="20">
    <location>
        <begin position="59"/>
        <end position="61"/>
    </location>
</feature>
<feature type="helix" evidence="21">
    <location>
        <begin position="64"/>
        <end position="67"/>
    </location>
</feature>
<feature type="helix" evidence="19">
    <location>
        <begin position="69"/>
        <end position="77"/>
    </location>
</feature>
<feature type="turn" evidence="19">
    <location>
        <begin position="83"/>
        <end position="85"/>
    </location>
</feature>
<feature type="helix" evidence="19">
    <location>
        <begin position="90"/>
        <end position="103"/>
    </location>
</feature>
<feature type="strand" evidence="19">
    <location>
        <begin position="107"/>
        <end position="109"/>
    </location>
</feature>
<feature type="helix" evidence="19">
    <location>
        <begin position="111"/>
        <end position="113"/>
    </location>
</feature>
<feature type="strand" evidence="19">
    <location>
        <begin position="117"/>
        <end position="120"/>
    </location>
</feature>
<feature type="strand" evidence="19">
    <location>
        <begin position="122"/>
        <end position="127"/>
    </location>
</feature>
<organism>
    <name type="scientific">Homo sapiens</name>
    <name type="common">Human</name>
    <dbReference type="NCBI Taxonomy" id="9606"/>
    <lineage>
        <taxon>Eukaryota</taxon>
        <taxon>Metazoa</taxon>
        <taxon>Chordata</taxon>
        <taxon>Craniata</taxon>
        <taxon>Vertebrata</taxon>
        <taxon>Euteleostomi</taxon>
        <taxon>Mammalia</taxon>
        <taxon>Eutheria</taxon>
        <taxon>Euarchontoglires</taxon>
        <taxon>Primates</taxon>
        <taxon>Haplorrhini</taxon>
        <taxon>Catarrhini</taxon>
        <taxon>Hominidae</taxon>
        <taxon>Homo</taxon>
    </lineage>
</organism>
<gene>
    <name evidence="14 15" type="primary">IRF4</name>
    <name evidence="16" type="synonym">MUM1</name>
</gene>
<dbReference type="EMBL" id="U52682">
    <property type="protein sequence ID" value="AAC50779.1"/>
    <property type="molecule type" value="mRNA"/>
</dbReference>
<dbReference type="EMBL" id="U63738">
    <property type="protein sequence ID" value="AAB37258.1"/>
    <property type="molecule type" value="mRNA"/>
</dbReference>
<dbReference type="EMBL" id="AL365272">
    <property type="status" value="NOT_ANNOTATED_CDS"/>
    <property type="molecule type" value="Genomic_DNA"/>
</dbReference>
<dbReference type="EMBL" id="AL589962">
    <property type="status" value="NOT_ANNOTATED_CDS"/>
    <property type="molecule type" value="Genomic_DNA"/>
</dbReference>
<dbReference type="EMBL" id="BC015752">
    <property type="protein sequence ID" value="AAH15752.1"/>
    <property type="molecule type" value="mRNA"/>
</dbReference>
<dbReference type="CCDS" id="CCDS4469.1">
    <molecule id="Q15306-1"/>
</dbReference>
<dbReference type="CCDS" id="CCDS93847.1">
    <molecule id="Q15306-2"/>
</dbReference>
<dbReference type="RefSeq" id="NP_001182215.1">
    <molecule id="Q15306-2"/>
    <property type="nucleotide sequence ID" value="NM_001195286.2"/>
</dbReference>
<dbReference type="RefSeq" id="NP_002451.2">
    <molecule id="Q15306-1"/>
    <property type="nucleotide sequence ID" value="NM_002460.4"/>
</dbReference>
<dbReference type="PDB" id="2DLL">
    <property type="method" value="NMR"/>
    <property type="chains" value="A=23-130"/>
</dbReference>
<dbReference type="PDB" id="6TD4">
    <property type="method" value="X-ray"/>
    <property type="resolution" value="1.71 A"/>
    <property type="chains" value="A=20-132"/>
</dbReference>
<dbReference type="PDB" id="7JM4">
    <property type="method" value="X-ray"/>
    <property type="resolution" value="2.95 A"/>
    <property type="chains" value="A/B/G/H=21-129"/>
</dbReference>
<dbReference type="PDB" id="7O56">
    <property type="method" value="X-ray"/>
    <property type="resolution" value="2.60 A"/>
    <property type="chains" value="A/B/C=20-139"/>
</dbReference>
<dbReference type="PDB" id="7OGS">
    <property type="method" value="X-ray"/>
    <property type="resolution" value="2.37 A"/>
    <property type="chains" value="A/B/E/F=20-139"/>
</dbReference>
<dbReference type="PDB" id="7OOT">
    <property type="method" value="X-ray"/>
    <property type="resolution" value="2.25 A"/>
    <property type="chains" value="A/B=20-139"/>
</dbReference>
<dbReference type="PDB" id="7RH2">
    <property type="method" value="X-ray"/>
    <property type="resolution" value="2.47 A"/>
    <property type="chains" value="A/B/G/H=21-129"/>
</dbReference>
<dbReference type="PDBsum" id="2DLL"/>
<dbReference type="PDBsum" id="6TD4"/>
<dbReference type="PDBsum" id="7JM4"/>
<dbReference type="PDBsum" id="7O56"/>
<dbReference type="PDBsum" id="7OGS"/>
<dbReference type="PDBsum" id="7OOT"/>
<dbReference type="PDBsum" id="7RH2"/>
<dbReference type="SMR" id="Q15306"/>
<dbReference type="BioGRID" id="109870">
    <property type="interactions" value="81"/>
</dbReference>
<dbReference type="FunCoup" id="Q15306">
    <property type="interactions" value="2292"/>
</dbReference>
<dbReference type="IntAct" id="Q15306">
    <property type="interactions" value="69"/>
</dbReference>
<dbReference type="MINT" id="Q15306"/>
<dbReference type="STRING" id="9606.ENSP00000370343"/>
<dbReference type="GlyGen" id="Q15306">
    <property type="glycosylation" value="1 site, 1 O-linked glycan (1 site)"/>
</dbReference>
<dbReference type="iPTMnet" id="Q15306"/>
<dbReference type="PhosphoSitePlus" id="Q15306"/>
<dbReference type="BioMuta" id="IRF4"/>
<dbReference type="DMDM" id="2497445"/>
<dbReference type="MassIVE" id="Q15306"/>
<dbReference type="PaxDb" id="9606-ENSP00000370343"/>
<dbReference type="PeptideAtlas" id="Q15306"/>
<dbReference type="ProteomicsDB" id="60524">
    <molecule id="Q15306-1"/>
</dbReference>
<dbReference type="ProteomicsDB" id="60525">
    <molecule id="Q15306-2"/>
</dbReference>
<dbReference type="Antibodypedia" id="1057">
    <property type="antibodies" value="707 antibodies from 47 providers"/>
</dbReference>
<dbReference type="DNASU" id="3662"/>
<dbReference type="Ensembl" id="ENST00000380956.9">
    <molecule id="Q15306-1"/>
    <property type="protein sequence ID" value="ENSP00000370343.4"/>
    <property type="gene ID" value="ENSG00000137265.16"/>
</dbReference>
<dbReference type="Ensembl" id="ENST00000696871.1">
    <molecule id="Q15306-2"/>
    <property type="protein sequence ID" value="ENSP00000512940.1"/>
    <property type="gene ID" value="ENSG00000137265.16"/>
</dbReference>
<dbReference type="GeneID" id="3662"/>
<dbReference type="KEGG" id="hsa:3662"/>
<dbReference type="MANE-Select" id="ENST00000380956.9">
    <property type="protein sequence ID" value="ENSP00000370343.4"/>
    <property type="RefSeq nucleotide sequence ID" value="NM_002460.4"/>
    <property type="RefSeq protein sequence ID" value="NP_002451.2"/>
</dbReference>
<dbReference type="UCSC" id="uc003msz.5">
    <molecule id="Q15306-1"/>
    <property type="organism name" value="human"/>
</dbReference>
<dbReference type="AGR" id="HGNC:6119"/>
<dbReference type="CTD" id="3662"/>
<dbReference type="DisGeNET" id="3662"/>
<dbReference type="GeneCards" id="IRF4"/>
<dbReference type="HGNC" id="HGNC:6119">
    <property type="gene designation" value="IRF4"/>
</dbReference>
<dbReference type="HPA" id="ENSG00000137265">
    <property type="expression patterns" value="Tissue enhanced (bone marrow, cervix, lymphoid tissue)"/>
</dbReference>
<dbReference type="MalaCards" id="IRF4"/>
<dbReference type="MIM" id="254500">
    <property type="type" value="phenotype"/>
</dbReference>
<dbReference type="MIM" id="601900">
    <property type="type" value="gene"/>
</dbReference>
<dbReference type="MIM" id="611724">
    <property type="type" value="phenotype"/>
</dbReference>
<dbReference type="MIM" id="621097">
    <property type="type" value="phenotype"/>
</dbReference>
<dbReference type="neXtProt" id="NX_Q15306"/>
<dbReference type="OpenTargets" id="ENSG00000137265"/>
<dbReference type="Orphanet" id="3452">
    <property type="disease" value="Whipple disease"/>
</dbReference>
<dbReference type="PharmGKB" id="PA29918"/>
<dbReference type="VEuPathDB" id="HostDB:ENSG00000137265"/>
<dbReference type="eggNOG" id="ENOG502QUE4">
    <property type="taxonomic scope" value="Eukaryota"/>
</dbReference>
<dbReference type="GeneTree" id="ENSGT00940000159059"/>
<dbReference type="InParanoid" id="Q15306"/>
<dbReference type="OMA" id="AKQLYYF"/>
<dbReference type="OrthoDB" id="8537190at2759"/>
<dbReference type="PAN-GO" id="Q15306">
    <property type="GO annotations" value="5 GO annotations based on evolutionary models"/>
</dbReference>
<dbReference type="PhylomeDB" id="Q15306"/>
<dbReference type="TreeFam" id="TF328512"/>
<dbReference type="PathwayCommons" id="Q15306"/>
<dbReference type="Reactome" id="R-HSA-6785807">
    <property type="pathway name" value="Interleukin-4 and Interleukin-13 signaling"/>
</dbReference>
<dbReference type="Reactome" id="R-HSA-877300">
    <property type="pathway name" value="Interferon gamma signaling"/>
</dbReference>
<dbReference type="Reactome" id="R-HSA-909733">
    <property type="pathway name" value="Interferon alpha/beta signaling"/>
</dbReference>
<dbReference type="Reactome" id="R-HSA-9725371">
    <property type="pathway name" value="Nuclear events stimulated by ALK signaling in cancer"/>
</dbReference>
<dbReference type="Reactome" id="R-HSA-9824585">
    <property type="pathway name" value="Regulation of MITF-M-dependent genes involved in pigmentation"/>
</dbReference>
<dbReference type="SignaLink" id="Q15306"/>
<dbReference type="SIGNOR" id="Q15306"/>
<dbReference type="BioGRID-ORCS" id="3662">
    <property type="hits" value="39 hits in 1182 CRISPR screens"/>
</dbReference>
<dbReference type="ChiTaRS" id="IRF4">
    <property type="organism name" value="human"/>
</dbReference>
<dbReference type="EvolutionaryTrace" id="Q15306"/>
<dbReference type="GeneWiki" id="IRF4"/>
<dbReference type="GenomeRNAi" id="3662"/>
<dbReference type="Pharos" id="Q15306">
    <property type="development level" value="Tbio"/>
</dbReference>
<dbReference type="PRO" id="PR:Q15306"/>
<dbReference type="Proteomes" id="UP000005640">
    <property type="component" value="Chromosome 6"/>
</dbReference>
<dbReference type="RNAct" id="Q15306">
    <property type="molecule type" value="protein"/>
</dbReference>
<dbReference type="Bgee" id="ENSG00000137265">
    <property type="expression patterns" value="Expressed in lymph node and 131 other cell types or tissues"/>
</dbReference>
<dbReference type="ExpressionAtlas" id="Q15306">
    <property type="expression patterns" value="baseline and differential"/>
</dbReference>
<dbReference type="GO" id="GO:0000785">
    <property type="term" value="C:chromatin"/>
    <property type="evidence" value="ECO:0000247"/>
    <property type="project" value="NTNU_SB"/>
</dbReference>
<dbReference type="GO" id="GO:0005829">
    <property type="term" value="C:cytosol"/>
    <property type="evidence" value="ECO:0000314"/>
    <property type="project" value="HPA"/>
</dbReference>
<dbReference type="GO" id="GO:0016020">
    <property type="term" value="C:membrane"/>
    <property type="evidence" value="ECO:0007005"/>
    <property type="project" value="UniProtKB"/>
</dbReference>
<dbReference type="GO" id="GO:0005654">
    <property type="term" value="C:nucleoplasm"/>
    <property type="evidence" value="ECO:0000314"/>
    <property type="project" value="HPA"/>
</dbReference>
<dbReference type="GO" id="GO:0000786">
    <property type="term" value="C:nucleosome"/>
    <property type="evidence" value="ECO:0007669"/>
    <property type="project" value="Ensembl"/>
</dbReference>
<dbReference type="GO" id="GO:0005634">
    <property type="term" value="C:nucleus"/>
    <property type="evidence" value="ECO:0000318"/>
    <property type="project" value="GO_Central"/>
</dbReference>
<dbReference type="GO" id="GO:0001228">
    <property type="term" value="F:DNA-binding transcription activator activity, RNA polymerase II-specific"/>
    <property type="evidence" value="ECO:0000314"/>
    <property type="project" value="NTNU_SB"/>
</dbReference>
<dbReference type="GO" id="GO:0003700">
    <property type="term" value="F:DNA-binding transcription factor activity"/>
    <property type="evidence" value="ECO:0000250"/>
    <property type="project" value="UniProtKB"/>
</dbReference>
<dbReference type="GO" id="GO:0000981">
    <property type="term" value="F:DNA-binding transcription factor activity, RNA polymerase II-specific"/>
    <property type="evidence" value="ECO:0000247"/>
    <property type="project" value="NTNU_SB"/>
</dbReference>
<dbReference type="GO" id="GO:0000978">
    <property type="term" value="F:RNA polymerase II cis-regulatory region sequence-specific DNA binding"/>
    <property type="evidence" value="ECO:0000314"/>
    <property type="project" value="NTNU_SB"/>
</dbReference>
<dbReference type="GO" id="GO:0043565">
    <property type="term" value="F:sequence-specific DNA binding"/>
    <property type="evidence" value="ECO:0000250"/>
    <property type="project" value="UniProtKB"/>
</dbReference>
<dbReference type="GO" id="GO:1990837">
    <property type="term" value="F:sequence-specific double-stranded DNA binding"/>
    <property type="evidence" value="ECO:0000314"/>
    <property type="project" value="ARUK-UCL"/>
</dbReference>
<dbReference type="GO" id="GO:0003713">
    <property type="term" value="F:transcription coactivator activity"/>
    <property type="evidence" value="ECO:0007669"/>
    <property type="project" value="Ensembl"/>
</dbReference>
<dbReference type="GO" id="GO:0006338">
    <property type="term" value="P:chromatin remodeling"/>
    <property type="evidence" value="ECO:0007669"/>
    <property type="project" value="Ensembl"/>
</dbReference>
<dbReference type="GO" id="GO:0042832">
    <property type="term" value="P:defense response to protozoan"/>
    <property type="evidence" value="ECO:0000250"/>
    <property type="project" value="UniProtKB"/>
</dbReference>
<dbReference type="GO" id="GO:0002376">
    <property type="term" value="P:immune system process"/>
    <property type="evidence" value="ECO:0000318"/>
    <property type="project" value="GO_Central"/>
</dbReference>
<dbReference type="GO" id="GO:0043011">
    <property type="term" value="P:myeloid dendritic cell differentiation"/>
    <property type="evidence" value="ECO:0007669"/>
    <property type="project" value="Ensembl"/>
</dbReference>
<dbReference type="GO" id="GO:0034122">
    <property type="term" value="P:negative regulation of toll-like receptor signaling pathway"/>
    <property type="evidence" value="ECO:0007669"/>
    <property type="project" value="Ensembl"/>
</dbReference>
<dbReference type="GO" id="GO:0120162">
    <property type="term" value="P:positive regulation of cold-induced thermogenesis"/>
    <property type="evidence" value="ECO:0000250"/>
    <property type="project" value="YuBioLab"/>
</dbReference>
<dbReference type="GO" id="GO:0045893">
    <property type="term" value="P:positive regulation of DNA-templated transcription"/>
    <property type="evidence" value="ECO:0000314"/>
    <property type="project" value="UniProtKB"/>
</dbReference>
<dbReference type="GO" id="GO:0032733">
    <property type="term" value="P:positive regulation of interleukin-10 production"/>
    <property type="evidence" value="ECO:0000314"/>
    <property type="project" value="UniProtKB"/>
</dbReference>
<dbReference type="GO" id="GO:0032736">
    <property type="term" value="P:positive regulation of interleukin-13 production"/>
    <property type="evidence" value="ECO:0000314"/>
    <property type="project" value="UniProtKB"/>
</dbReference>
<dbReference type="GO" id="GO:0032743">
    <property type="term" value="P:positive regulation of interleukin-2 production"/>
    <property type="evidence" value="ECO:0000314"/>
    <property type="project" value="UniProtKB"/>
</dbReference>
<dbReference type="GO" id="GO:0032753">
    <property type="term" value="P:positive regulation of interleukin-4 production"/>
    <property type="evidence" value="ECO:0000314"/>
    <property type="project" value="UniProtKB"/>
</dbReference>
<dbReference type="GO" id="GO:0045944">
    <property type="term" value="P:positive regulation of transcription by RNA polymerase II"/>
    <property type="evidence" value="ECO:0000314"/>
    <property type="project" value="NTNU_SB"/>
</dbReference>
<dbReference type="GO" id="GO:0045622">
    <property type="term" value="P:regulation of T-helper cell differentiation"/>
    <property type="evidence" value="ECO:0000303"/>
    <property type="project" value="UniProtKB"/>
</dbReference>
<dbReference type="GO" id="GO:0006357">
    <property type="term" value="P:regulation of transcription by RNA polymerase II"/>
    <property type="evidence" value="ECO:0000318"/>
    <property type="project" value="GO_Central"/>
</dbReference>
<dbReference type="GO" id="GO:0042110">
    <property type="term" value="P:T cell activation"/>
    <property type="evidence" value="ECO:0000303"/>
    <property type="project" value="UniProtKB"/>
</dbReference>
<dbReference type="GO" id="GO:0072540">
    <property type="term" value="P:T-helper 17 cell lineage commitment"/>
    <property type="evidence" value="ECO:0000250"/>
    <property type="project" value="UniProtKB"/>
</dbReference>
<dbReference type="CDD" id="cd00103">
    <property type="entry name" value="IRF"/>
    <property type="match status" value="1"/>
</dbReference>
<dbReference type="FunFam" id="1.10.10.10:FF:000041">
    <property type="entry name" value="Interferon regulatory factor 4"/>
    <property type="match status" value="1"/>
</dbReference>
<dbReference type="FunFam" id="2.60.200.10:FF:000005">
    <property type="entry name" value="Interferon regulatory factor 4 deltaE6"/>
    <property type="match status" value="1"/>
</dbReference>
<dbReference type="Gene3D" id="2.60.200.10">
    <property type="match status" value="1"/>
</dbReference>
<dbReference type="Gene3D" id="1.10.10.10">
    <property type="entry name" value="Winged helix-like DNA-binding domain superfamily/Winged helix DNA-binding domain"/>
    <property type="match status" value="1"/>
</dbReference>
<dbReference type="InterPro" id="IPR019817">
    <property type="entry name" value="Interferon_reg_fac_CS"/>
</dbReference>
<dbReference type="InterPro" id="IPR001346">
    <property type="entry name" value="Interferon_reg_fact_DNA-bd_dom"/>
</dbReference>
<dbReference type="InterPro" id="IPR019471">
    <property type="entry name" value="Interferon_reg_factor-3"/>
</dbReference>
<dbReference type="InterPro" id="IPR017855">
    <property type="entry name" value="SMAD-like_dom_sf"/>
</dbReference>
<dbReference type="InterPro" id="IPR008984">
    <property type="entry name" value="SMAD_FHA_dom_sf"/>
</dbReference>
<dbReference type="InterPro" id="IPR036388">
    <property type="entry name" value="WH-like_DNA-bd_sf"/>
</dbReference>
<dbReference type="InterPro" id="IPR036390">
    <property type="entry name" value="WH_DNA-bd_sf"/>
</dbReference>
<dbReference type="PANTHER" id="PTHR11949">
    <property type="entry name" value="INTERFERON REGULATORY FACTOR"/>
    <property type="match status" value="1"/>
</dbReference>
<dbReference type="PANTHER" id="PTHR11949:SF6">
    <property type="entry name" value="INTERFERON REGULATORY FACTOR 4"/>
    <property type="match status" value="1"/>
</dbReference>
<dbReference type="Pfam" id="PF00605">
    <property type="entry name" value="IRF"/>
    <property type="match status" value="1"/>
</dbReference>
<dbReference type="Pfam" id="PF10401">
    <property type="entry name" value="IRF-3"/>
    <property type="match status" value="1"/>
</dbReference>
<dbReference type="PRINTS" id="PR00267">
    <property type="entry name" value="INTFRNREGFCT"/>
</dbReference>
<dbReference type="SMART" id="SM00348">
    <property type="entry name" value="IRF"/>
    <property type="match status" value="1"/>
</dbReference>
<dbReference type="SMART" id="SM01243">
    <property type="entry name" value="IRF-3"/>
    <property type="match status" value="1"/>
</dbReference>
<dbReference type="SUPFAM" id="SSF49879">
    <property type="entry name" value="SMAD/FHA domain"/>
    <property type="match status" value="1"/>
</dbReference>
<dbReference type="SUPFAM" id="SSF46785">
    <property type="entry name" value="Winged helix' DNA-binding domain"/>
    <property type="match status" value="1"/>
</dbReference>
<dbReference type="PROSITE" id="PS00601">
    <property type="entry name" value="IRF_1"/>
    <property type="match status" value="1"/>
</dbReference>
<dbReference type="PROSITE" id="PS51507">
    <property type="entry name" value="IRF_2"/>
    <property type="match status" value="1"/>
</dbReference>
<comment type="function">
    <text evidence="9 11 12">Transcriptional activator. Binds to the interferon-stimulated response element (ISRE) of the MHC class I promoter. Binds the immunoglobulin lambda light chain enhancer, together with PU.1. Probably plays a role in ISRE-targeted signal transduction mechanisms specific to lymphoid cells. Involved in CD8(+) dendritic cell differentiation by forming a complex with the BATF-JUNB heterodimer in immune cells, leading to recognition of AICE sequence (5'-TGAnTCA/GAAA-3'), an immune-specific regulatory element, followed by cooperative binding of BATF and IRF4 and activation of genes.</text>
</comment>
<comment type="subunit">
    <text evidence="1 2 4 5 10">Interacts with the BATF-JUNB heterodimer. Interacts with BATF (via bZIP domain); the interaction is direct (By similarity). Interacts with SPIB (PubMed:10196196). Interacts with DEF6 (PubMed:12651066). Directly interacts with NLRP3 in the nucleus of Th2 cells; this interaction enhances IRF4 ability to bind to the IL4 promoter and is required for optimal IRF4-dependent IL4 transcription (By similarity). Interacts with SPI1 (PubMed:33951726).</text>
</comment>
<comment type="interaction">
    <interactant intactId="EBI-751345">
        <id>Q15306</id>
    </interactant>
    <interactant intactId="EBI-347559">
        <id>O95163</id>
        <label>ELP1</label>
    </interactant>
    <organismsDiffer>false</organismsDiffer>
    <experiments>2</experiments>
</comment>
<comment type="interaction">
    <interactant intactId="EBI-751345">
        <id>Q15306</id>
    </interactant>
    <interactant intactId="EBI-712067">
        <id>Q8TF65</id>
        <label>GIPC2</label>
    </interactant>
    <organismsDiffer>false</organismsDiffer>
    <experiments>5</experiments>
</comment>
<comment type="interaction">
    <interactant intactId="EBI-751345">
        <id>Q15306</id>
    </interactant>
    <interactant intactId="EBI-358664">
        <id>P51617</id>
        <label>IRAK1</label>
    </interactant>
    <organismsDiffer>false</organismsDiffer>
    <experiments>2</experiments>
</comment>
<comment type="interaction">
    <interactant intactId="EBI-751345">
        <id>Q15306</id>
    </interactant>
    <interactant intactId="EBI-1047967">
        <id>Q86UE8</id>
        <label>TLK2</label>
    </interactant>
    <organismsDiffer>false</organismsDiffer>
    <experiments>2</experiments>
</comment>
<comment type="interaction">
    <interactant intactId="EBI-751345">
        <id>Q15306</id>
    </interactant>
    <interactant intactId="EBI-2559824">
        <id>Q7Z6J9</id>
        <label>TSEN54</label>
    </interactant>
    <organismsDiffer>false</organismsDiffer>
    <experiments>3</experiments>
</comment>
<comment type="interaction">
    <interactant intactId="EBI-751345">
        <id>Q15306</id>
    </interactant>
    <interactant intactId="EBI-1057466">
        <id>Q9H6S0</id>
        <label>YTHDC2</label>
    </interactant>
    <organismsDiffer>false</organismsDiffer>
    <experiments>2</experiments>
</comment>
<comment type="subcellular location">
    <subcellularLocation>
        <location evidence="12">Nucleus</location>
    </subcellularLocation>
    <subcellularLocation>
        <location evidence="12">Cytoplasm</location>
    </subcellularLocation>
</comment>
<comment type="alternative products">
    <event type="alternative splicing"/>
    <isoform>
        <id>Q15306-1</id>
        <name>1</name>
        <sequence type="displayed"/>
    </isoform>
    <isoform>
        <id>Q15306-2</id>
        <name>2</name>
        <sequence type="described" ref="VSP_002755"/>
    </isoform>
</comment>
<comment type="tissue specificity">
    <text>Lymphoid cells.</text>
</comment>
<comment type="induction">
    <text>Not induced by interferons.</text>
</comment>
<comment type="PTM">
    <text evidence="1">Phosphorylation by ROCK2 regulates IL-17 and IL-21 production.</text>
</comment>
<comment type="polymorphism">
    <text evidence="6 7">Genetic variants in IRF4 define the skin/hair/eye pigmentation variation locus 8 (SHEP8) [MIM:611724]. Hair, eye and skin pigmentation are among the most visible examples of human phenotypic variation, with a broad normal range that is subject to substantial geographic stratification. In the case of skin, individuals tend to have lighter pigmentation with increasing distance from the equator. By contrast, the majority of variation in human eye and hair color is found among individuals of European ancestry, with most other human populations fixed for brown eyes and black hair.</text>
</comment>
<comment type="disease" evidence="13">
    <disease id="DI-02700">
        <name>Multiple myeloma</name>
        <acronym>MM</acronym>
        <description>A malignant tumor of plasma cells usually arising in the bone marrow and characterized by diffuse involvement of the skeletal system, hyperglobulinemia, Bence-Jones proteinuria and anemia. Complications of multiple myeloma are bone pain, hypercalcemia, renal failure and spinal cord compression. The aberrant antibodies that are produced lead to impaired humoral immunity and patients have a high prevalence of infection. Amyloidosis may develop in some patients. Multiple myeloma is part of a spectrum of diseases ranging from monoclonal gammopathy of unknown significance (MGUS) to plasma cell leukemia.</description>
        <dbReference type="MIM" id="254500"/>
    </disease>
    <text>The gene represented in this entry may be involved in disease pathogenesis. A chromosomal aberration involving IRF4 has been found in multiple myeloma. Translocation t(6;14)(p25;q32) with the IgH locus.</text>
</comment>
<comment type="disease" evidence="8 9 11 12">
    <disease id="DI-07001">
        <name>Immunodeficiency 131</name>
        <acronym>IMD131</acronym>
        <description>An immunologic disorder characterized by recurrent infections, including infections with opportunistic pathogens, and low IgM, IgG, and IgA serum levels, low plasma cell counts and abnormal T-cell subsets. IMD131 inheritance can be autosomal dominant or autosomal recessive.</description>
        <dbReference type="MIM" id="621097"/>
    </disease>
    <text>The disease is caused by variants affecting the gene represented in this entry.</text>
</comment>
<comment type="similarity">
    <text evidence="3">Belongs to the IRF family.</text>
</comment>
<comment type="online information" name="Atlas of Genetics and Cytogenetics in Oncology and Haematology">
    <link uri="https://atlasgeneticsoncology.org/gene/231/IRF4"/>
</comment>
<keyword id="KW-0002">3D-structure</keyword>
<keyword id="KW-0010">Activator</keyword>
<keyword id="KW-0025">Alternative splicing</keyword>
<keyword id="KW-0160">Chromosomal rearrangement</keyword>
<keyword id="KW-0963">Cytoplasm</keyword>
<keyword id="KW-0225">Disease variant</keyword>
<keyword id="KW-0238">DNA-binding</keyword>
<keyword id="KW-0539">Nucleus</keyword>
<keyword id="KW-0597">Phosphoprotein</keyword>
<keyword id="KW-1267">Proteomics identification</keyword>
<keyword id="KW-1185">Reference proteome</keyword>
<keyword id="KW-0804">Transcription</keyword>
<keyword id="KW-0805">Transcription regulation</keyword>
<sequence length="451" mass="51772">MNLEGGGRGGEFGMSAVSCGNGKLRQWLIDQIDSGKYPGLVWENEEKSIFRIPWKHAGKQDYNREEDAALFKAWALFKGKFREGIDKPDPPTWKTRLRCALNKSNDFEELVERSQLDISDPYKVYRIVPEGAKKGAKQLTLEDPQMSMSHPYTMTTPYPSLPAQQVHNYMMPPLDRSWRDYVPDQPHPEIPYQCPMTFGPRGHHWQGPACENGCQVTGTFYACAPPESQAPGVPTEPSIRSAEALAFSDCRLHICLYYREILVKELTTSSPEGCRISHGHTYDASNLDQVLFPYPEDNGQRKNIEKLLSHLERGVVLWMAPDGLYAKRLCQSRIYWDGPLALCNDRPNKLERDQTCKLFDTQQFLSELQAFAHHGRSLPRFQVTLCFGEEFPDPQRQRKLITAHVEPLLARQLYYFAQQNSGHFLRGYDLPEHISNPEDYHRSIRHSSIQE</sequence>
<proteinExistence type="evidence at protein level"/>